<proteinExistence type="evidence at protein level"/>
<keyword id="KW-0903">Direct protein sequencing</keyword>
<keyword id="KW-0406">Ion transport</keyword>
<keyword id="KW-0472">Membrane</keyword>
<keyword id="KW-0496">Mitochondrion</keyword>
<keyword id="KW-1000">Mitochondrion outer membrane</keyword>
<keyword id="KW-0611">Plant defense</keyword>
<keyword id="KW-0626">Porin</keyword>
<keyword id="KW-1185">Reference proteome</keyword>
<keyword id="KW-0812">Transmembrane</keyword>
<keyword id="KW-1134">Transmembrane beta strand</keyword>
<keyword id="KW-0813">Transport</keyword>
<reference key="1">
    <citation type="journal article" date="2000" name="Nature">
        <title>Sequence and analysis of chromosome 3 of the plant Arabidopsis thaliana.</title>
        <authorList>
            <person name="Salanoubat M."/>
            <person name="Lemcke K."/>
            <person name="Rieger M."/>
            <person name="Ansorge W."/>
            <person name="Unseld M."/>
            <person name="Fartmann B."/>
            <person name="Valle G."/>
            <person name="Bloecker H."/>
            <person name="Perez-Alonso M."/>
            <person name="Obermaier B."/>
            <person name="Delseny M."/>
            <person name="Boutry M."/>
            <person name="Grivell L.A."/>
            <person name="Mache R."/>
            <person name="Puigdomenech P."/>
            <person name="De Simone V."/>
            <person name="Choisne N."/>
            <person name="Artiguenave F."/>
            <person name="Robert C."/>
            <person name="Brottier P."/>
            <person name="Wincker P."/>
            <person name="Cattolico L."/>
            <person name="Weissenbach J."/>
            <person name="Saurin W."/>
            <person name="Quetier F."/>
            <person name="Schaefer M."/>
            <person name="Mueller-Auer S."/>
            <person name="Gabel C."/>
            <person name="Fuchs M."/>
            <person name="Benes V."/>
            <person name="Wurmbach E."/>
            <person name="Drzonek H."/>
            <person name="Erfle H."/>
            <person name="Jordan N."/>
            <person name="Bangert S."/>
            <person name="Wiedelmann R."/>
            <person name="Kranz H."/>
            <person name="Voss H."/>
            <person name="Holland R."/>
            <person name="Brandt P."/>
            <person name="Nyakatura G."/>
            <person name="Vezzi A."/>
            <person name="D'Angelo M."/>
            <person name="Pallavicini A."/>
            <person name="Toppo S."/>
            <person name="Simionati B."/>
            <person name="Conrad A."/>
            <person name="Hornischer K."/>
            <person name="Kauer G."/>
            <person name="Loehnert T.-H."/>
            <person name="Nordsiek G."/>
            <person name="Reichelt J."/>
            <person name="Scharfe M."/>
            <person name="Schoen O."/>
            <person name="Bargues M."/>
            <person name="Terol J."/>
            <person name="Climent J."/>
            <person name="Navarro P."/>
            <person name="Collado C."/>
            <person name="Perez-Perez A."/>
            <person name="Ottenwaelder B."/>
            <person name="Duchemin D."/>
            <person name="Cooke R."/>
            <person name="Laudie M."/>
            <person name="Berger-Llauro C."/>
            <person name="Purnelle B."/>
            <person name="Masuy D."/>
            <person name="de Haan M."/>
            <person name="Maarse A.C."/>
            <person name="Alcaraz J.-P."/>
            <person name="Cottet A."/>
            <person name="Casacuberta E."/>
            <person name="Monfort A."/>
            <person name="Argiriou A."/>
            <person name="Flores M."/>
            <person name="Liguori R."/>
            <person name="Vitale D."/>
            <person name="Mannhaupt G."/>
            <person name="Haase D."/>
            <person name="Schoof H."/>
            <person name="Rudd S."/>
            <person name="Zaccaria P."/>
            <person name="Mewes H.-W."/>
            <person name="Mayer K.F.X."/>
            <person name="Kaul S."/>
            <person name="Town C.D."/>
            <person name="Koo H.L."/>
            <person name="Tallon L.J."/>
            <person name="Jenkins J."/>
            <person name="Rooney T."/>
            <person name="Rizzo M."/>
            <person name="Walts A."/>
            <person name="Utterback T."/>
            <person name="Fujii C.Y."/>
            <person name="Shea T.P."/>
            <person name="Creasy T.H."/>
            <person name="Haas B."/>
            <person name="Maiti R."/>
            <person name="Wu D."/>
            <person name="Peterson J."/>
            <person name="Van Aken S."/>
            <person name="Pai G."/>
            <person name="Militscher J."/>
            <person name="Sellers P."/>
            <person name="Gill J.E."/>
            <person name="Feldblyum T.V."/>
            <person name="Preuss D."/>
            <person name="Lin X."/>
            <person name="Nierman W.C."/>
            <person name="Salzberg S.L."/>
            <person name="White O."/>
            <person name="Venter J.C."/>
            <person name="Fraser C.M."/>
            <person name="Kaneko T."/>
            <person name="Nakamura Y."/>
            <person name="Sato S."/>
            <person name="Kato T."/>
            <person name="Asamizu E."/>
            <person name="Sasamoto S."/>
            <person name="Kimura T."/>
            <person name="Idesawa K."/>
            <person name="Kawashima K."/>
            <person name="Kishida Y."/>
            <person name="Kiyokawa C."/>
            <person name="Kohara M."/>
            <person name="Matsumoto M."/>
            <person name="Matsuno A."/>
            <person name="Muraki A."/>
            <person name="Nakayama S."/>
            <person name="Nakazaki N."/>
            <person name="Shinpo S."/>
            <person name="Takeuchi C."/>
            <person name="Wada T."/>
            <person name="Watanabe A."/>
            <person name="Yamada M."/>
            <person name="Yasuda M."/>
            <person name="Tabata S."/>
        </authorList>
    </citation>
    <scope>NUCLEOTIDE SEQUENCE [LARGE SCALE GENOMIC DNA]</scope>
    <source>
        <strain>cv. Columbia</strain>
    </source>
</reference>
<reference key="2">
    <citation type="journal article" date="2017" name="Plant J.">
        <title>Araport11: a complete reannotation of the Arabidopsis thaliana reference genome.</title>
        <authorList>
            <person name="Cheng C.Y."/>
            <person name="Krishnakumar V."/>
            <person name="Chan A.P."/>
            <person name="Thibaud-Nissen F."/>
            <person name="Schobel S."/>
            <person name="Town C.D."/>
        </authorList>
    </citation>
    <scope>GENOME REANNOTATION</scope>
    <source>
        <strain>cv. Columbia</strain>
    </source>
</reference>
<reference key="3">
    <citation type="journal article" date="2003" name="Science">
        <title>Empirical analysis of transcriptional activity in the Arabidopsis genome.</title>
        <authorList>
            <person name="Yamada K."/>
            <person name="Lim J."/>
            <person name="Dale J.M."/>
            <person name="Chen H."/>
            <person name="Shinn P."/>
            <person name="Palm C.J."/>
            <person name="Southwick A.M."/>
            <person name="Wu H.C."/>
            <person name="Kim C.J."/>
            <person name="Nguyen M."/>
            <person name="Pham P.K."/>
            <person name="Cheuk R.F."/>
            <person name="Karlin-Newmann G."/>
            <person name="Liu S.X."/>
            <person name="Lam B."/>
            <person name="Sakano H."/>
            <person name="Wu T."/>
            <person name="Yu G."/>
            <person name="Miranda M."/>
            <person name="Quach H.L."/>
            <person name="Tripp M."/>
            <person name="Chang C.H."/>
            <person name="Lee J.M."/>
            <person name="Toriumi M.J."/>
            <person name="Chan M.M."/>
            <person name="Tang C.C."/>
            <person name="Onodera C.S."/>
            <person name="Deng J.M."/>
            <person name="Akiyama K."/>
            <person name="Ansari Y."/>
            <person name="Arakawa T."/>
            <person name="Banh J."/>
            <person name="Banno F."/>
            <person name="Bowser L."/>
            <person name="Brooks S.Y."/>
            <person name="Carninci P."/>
            <person name="Chao Q."/>
            <person name="Choy N."/>
            <person name="Enju A."/>
            <person name="Goldsmith A.D."/>
            <person name="Gurjal M."/>
            <person name="Hansen N.F."/>
            <person name="Hayashizaki Y."/>
            <person name="Johnson-Hopson C."/>
            <person name="Hsuan V.W."/>
            <person name="Iida K."/>
            <person name="Karnes M."/>
            <person name="Khan S."/>
            <person name="Koesema E."/>
            <person name="Ishida J."/>
            <person name="Jiang P.X."/>
            <person name="Jones T."/>
            <person name="Kawai J."/>
            <person name="Kamiya A."/>
            <person name="Meyers C."/>
            <person name="Nakajima M."/>
            <person name="Narusaka M."/>
            <person name="Seki M."/>
            <person name="Sakurai T."/>
            <person name="Satou M."/>
            <person name="Tamse R."/>
            <person name="Vaysberg M."/>
            <person name="Wallender E.K."/>
            <person name="Wong C."/>
            <person name="Yamamura Y."/>
            <person name="Yuan S."/>
            <person name="Shinozaki K."/>
            <person name="Davis R.W."/>
            <person name="Theologis A."/>
            <person name="Ecker J.R."/>
        </authorList>
    </citation>
    <scope>NUCLEOTIDE SEQUENCE [LARGE SCALE MRNA]</scope>
    <source>
        <strain>cv. Columbia</strain>
    </source>
</reference>
<reference key="4">
    <citation type="journal article" date="2001" name="Plant Physiol.">
        <title>Proteomic approach to identify novel mitochondrial proteins in Arabidopsis.</title>
        <authorList>
            <person name="Kruft V."/>
            <person name="Eubel H."/>
            <person name="Jaensch L."/>
            <person name="Werhahn W."/>
            <person name="Braun H.-P."/>
        </authorList>
    </citation>
    <scope>PROTEIN SEQUENCE OF 2-9</scope>
    <scope>SUBCELLULAR LOCATION</scope>
    <source>
        <tissue>Leaf</tissue>
        <tissue>Stem</tissue>
    </source>
</reference>
<reference key="5">
    <citation type="journal article" date="2004" name="Plant Cell">
        <title>Experimental analysis of the Arabidopsis mitochondrial proteome highlights signaling and regulatory components, provides assessment of targeting prediction programs, and indicates plant-specific mitochondrial proteins.</title>
        <authorList>
            <person name="Heazlewood J.L."/>
            <person name="Tonti-Filippini J.S."/>
            <person name="Gout A.M."/>
            <person name="Day D.A."/>
            <person name="Whelan J."/>
            <person name="Millar A.H."/>
        </authorList>
    </citation>
    <scope>IDENTIFICATION BY MASS SPECTROMETRY</scope>
    <scope>SUBCELLULAR LOCATION [LARGE SCALE ANALYSIS]</scope>
    <source>
        <strain>cv. Landsberg erecta</strain>
    </source>
</reference>
<reference key="6">
    <citation type="journal article" date="2009" name="Mol. Cells">
        <title>Pathogen inducible voltage-dependent anion channel (AtVDAC) isoforms are localized to mitochondria membrane in Arabidopsis.</title>
        <authorList>
            <person name="Lee S.M."/>
            <person name="Hoang M.H."/>
            <person name="Han H.J."/>
            <person name="Kim H.S."/>
            <person name="Lee K."/>
            <person name="Kim K.E."/>
            <person name="Kim D.H."/>
            <person name="Lee S.Y."/>
            <person name="Chung W.S."/>
        </authorList>
    </citation>
    <scope>SUBCELLULAR LOCATION</scope>
    <scope>INDUCTION</scope>
</reference>
<reference key="7">
    <citation type="journal article" date="2011" name="J. Exp. Bot.">
        <title>Molecular and genetic characterization of the gene family encoding the voltage-dependent anion channel in Arabidopsis.</title>
        <authorList>
            <person name="Tateda C."/>
            <person name="Watanabe K."/>
            <person name="Kusano T."/>
            <person name="Takahashi Y."/>
        </authorList>
    </citation>
    <scope>FUNCTION</scope>
    <scope>SUBCELLULAR LOCATION</scope>
    <scope>TISSUE SPECIFICITY</scope>
    <scope>INDUCTION</scope>
    <scope>GENE FAMILY</scope>
    <scope>DISRUPTION PHENOTYPE</scope>
    <scope>MUTAGENESIS OF PRO-223</scope>
</reference>
<organism>
    <name type="scientific">Arabidopsis thaliana</name>
    <name type="common">Mouse-ear cress</name>
    <dbReference type="NCBI Taxonomy" id="3702"/>
    <lineage>
        <taxon>Eukaryota</taxon>
        <taxon>Viridiplantae</taxon>
        <taxon>Streptophyta</taxon>
        <taxon>Embryophyta</taxon>
        <taxon>Tracheophyta</taxon>
        <taxon>Spermatophyta</taxon>
        <taxon>Magnoliopsida</taxon>
        <taxon>eudicotyledons</taxon>
        <taxon>Gunneridae</taxon>
        <taxon>Pentapetalae</taxon>
        <taxon>rosids</taxon>
        <taxon>malvids</taxon>
        <taxon>Brassicales</taxon>
        <taxon>Brassicaceae</taxon>
        <taxon>Camelineae</taxon>
        <taxon>Arabidopsis</taxon>
    </lineage>
</organism>
<comment type="function">
    <text evidence="1 5">Forms a channel through the mitochondrial outer membrane that allows diffusion of small hydrophilic molecules. The channel adopts an open conformation at low or zero membrane potential and a closed conformation at potentials above 30-40 mV. The open state has a weak anion selectivity whereas the closed state is cation-selective (By similarity). Involved in plant development at reproductive stage, is important for pollen development and may regulate hydrogen peroxide generation during disease resistance.</text>
</comment>
<comment type="interaction">
    <interactant intactId="EBI-1644501">
        <id>Q9SRH5</id>
    </interactant>
    <interactant intactId="EBI-1644489">
        <id>Q42525</id>
        <label>HXK1</label>
    </interactant>
    <organismsDiffer>false</organismsDiffer>
    <experiments>2</experiments>
</comment>
<comment type="subcellular location">
    <subcellularLocation>
        <location evidence="2 3 4 5">Mitochondrion outer membrane</location>
    </subcellularLocation>
</comment>
<comment type="tissue specificity">
    <text evidence="5">Expressed in shoot meristems, root meristematic zone, lateral roots, leaves, stigma and anthers.</text>
</comment>
<comment type="induction">
    <text evidence="4 5">By the bacterial pathogen P.syringae pv. tomato.</text>
</comment>
<comment type="domain">
    <text>Consists mainly of membrane-spanning sided beta-sheets.</text>
</comment>
<comment type="disruption phenotype">
    <text evidence="5">In vdac1-6 homozygous plants, normal growth, but small siliques and decreased pollen germination rate and tube length.</text>
</comment>
<comment type="similarity">
    <text evidence="6">Belongs to the eukaryotic mitochondrial porin (TC 1.B.8.1) family.</text>
</comment>
<feature type="initiator methionine" description="Removed" evidence="2">
    <location>
        <position position="1"/>
    </location>
</feature>
<feature type="chain" id="PRO_0000050526" description="Mitochondrial outer membrane protein porin 1">
    <location>
        <begin position="2"/>
        <end position="276"/>
    </location>
</feature>
<feature type="mutagenesis site" description="Alteration of subcellular localization." evidence="5">
    <original>P</original>
    <variation>H</variation>
    <location>
        <position position="223"/>
    </location>
</feature>
<dbReference type="EMBL" id="AC010676">
    <property type="protein sequence ID" value="AAF03498.1"/>
    <property type="molecule type" value="Genomic_DNA"/>
</dbReference>
<dbReference type="EMBL" id="CP002686">
    <property type="protein sequence ID" value="AEE73632.1"/>
    <property type="molecule type" value="Genomic_DNA"/>
</dbReference>
<dbReference type="EMBL" id="AY037217">
    <property type="protein sequence ID" value="AAK59817.1"/>
    <property type="molecule type" value="mRNA"/>
</dbReference>
<dbReference type="EMBL" id="AY113169">
    <property type="protein sequence ID" value="AAM47472.1"/>
    <property type="molecule type" value="mRNA"/>
</dbReference>
<dbReference type="RefSeq" id="NP_186777.1">
    <property type="nucleotide sequence ID" value="NM_110994.4"/>
</dbReference>
<dbReference type="SMR" id="Q9SRH5"/>
<dbReference type="BioGRID" id="6248">
    <property type="interactions" value="6"/>
</dbReference>
<dbReference type="FunCoup" id="Q9SRH5">
    <property type="interactions" value="3274"/>
</dbReference>
<dbReference type="IntAct" id="Q9SRH5">
    <property type="interactions" value="4"/>
</dbReference>
<dbReference type="MINT" id="Q9SRH5"/>
<dbReference type="STRING" id="3702.Q9SRH5"/>
<dbReference type="TCDB" id="1.B.8.1.15">
    <property type="family name" value="the mitochondrial and plastid porin (mpp) family"/>
</dbReference>
<dbReference type="iPTMnet" id="Q9SRH5"/>
<dbReference type="PaxDb" id="3702-AT3G01280.1"/>
<dbReference type="ProteomicsDB" id="243225"/>
<dbReference type="DNASU" id="820914"/>
<dbReference type="EnsemblPlants" id="AT3G01280.1">
    <property type="protein sequence ID" value="AT3G01280.1"/>
    <property type="gene ID" value="AT3G01280"/>
</dbReference>
<dbReference type="GeneID" id="820914"/>
<dbReference type="Gramene" id="AT3G01280.1">
    <property type="protein sequence ID" value="AT3G01280.1"/>
    <property type="gene ID" value="AT3G01280"/>
</dbReference>
<dbReference type="KEGG" id="ath:AT3G01280"/>
<dbReference type="Araport" id="AT3G01280"/>
<dbReference type="TAIR" id="AT3G01280">
    <property type="gene designation" value="VDAC1"/>
</dbReference>
<dbReference type="eggNOG" id="KOG3126">
    <property type="taxonomic scope" value="Eukaryota"/>
</dbReference>
<dbReference type="HOGENOM" id="CLU_069937_0_0_1"/>
<dbReference type="InParanoid" id="Q9SRH5"/>
<dbReference type="OMA" id="HACVNEG"/>
<dbReference type="OrthoDB" id="7827681at2759"/>
<dbReference type="PhylomeDB" id="Q9SRH5"/>
<dbReference type="CD-CODE" id="4299E36E">
    <property type="entry name" value="Nucleolus"/>
</dbReference>
<dbReference type="PRO" id="PR:Q9SRH5"/>
<dbReference type="Proteomes" id="UP000006548">
    <property type="component" value="Chromosome 3"/>
</dbReference>
<dbReference type="ExpressionAtlas" id="Q9SRH5">
    <property type="expression patterns" value="baseline and differential"/>
</dbReference>
<dbReference type="GO" id="GO:0009507">
    <property type="term" value="C:chloroplast"/>
    <property type="evidence" value="ECO:0007005"/>
    <property type="project" value="TAIR"/>
</dbReference>
<dbReference type="GO" id="GO:0009941">
    <property type="term" value="C:chloroplast envelope"/>
    <property type="evidence" value="ECO:0007005"/>
    <property type="project" value="TAIR"/>
</dbReference>
<dbReference type="GO" id="GO:0005829">
    <property type="term" value="C:cytosol"/>
    <property type="evidence" value="ECO:0007005"/>
    <property type="project" value="TAIR"/>
</dbReference>
<dbReference type="GO" id="GO:0005741">
    <property type="term" value="C:mitochondrial outer membrane"/>
    <property type="evidence" value="ECO:0007669"/>
    <property type="project" value="UniProtKB-SubCell"/>
</dbReference>
<dbReference type="GO" id="GO:0005739">
    <property type="term" value="C:mitochondrion"/>
    <property type="evidence" value="ECO:0000314"/>
    <property type="project" value="TAIR"/>
</dbReference>
<dbReference type="GO" id="GO:0000325">
    <property type="term" value="C:plant-type vacuole"/>
    <property type="evidence" value="ECO:0007005"/>
    <property type="project" value="TAIR"/>
</dbReference>
<dbReference type="GO" id="GO:0005886">
    <property type="term" value="C:plasma membrane"/>
    <property type="evidence" value="ECO:0007005"/>
    <property type="project" value="TAIR"/>
</dbReference>
<dbReference type="GO" id="GO:0046930">
    <property type="term" value="C:pore complex"/>
    <property type="evidence" value="ECO:0007669"/>
    <property type="project" value="UniProtKB-KW"/>
</dbReference>
<dbReference type="GO" id="GO:0005773">
    <property type="term" value="C:vacuole"/>
    <property type="evidence" value="ECO:0007005"/>
    <property type="project" value="TAIR"/>
</dbReference>
<dbReference type="GO" id="GO:0015288">
    <property type="term" value="F:porin activity"/>
    <property type="evidence" value="ECO:0007669"/>
    <property type="project" value="UniProtKB-KW"/>
</dbReference>
<dbReference type="GO" id="GO:0008308">
    <property type="term" value="F:voltage-gated monoatomic anion channel activity"/>
    <property type="evidence" value="ECO:0000315"/>
    <property type="project" value="TAIR"/>
</dbReference>
<dbReference type="GO" id="GO:0006952">
    <property type="term" value="P:defense response"/>
    <property type="evidence" value="ECO:0007669"/>
    <property type="project" value="UniProtKB-KW"/>
</dbReference>
<dbReference type="GO" id="GO:0009617">
    <property type="term" value="P:response to bacterium"/>
    <property type="evidence" value="ECO:0000270"/>
    <property type="project" value="TAIR"/>
</dbReference>
<dbReference type="CDD" id="cd07306">
    <property type="entry name" value="Porin3_VDAC"/>
    <property type="match status" value="1"/>
</dbReference>
<dbReference type="FunFam" id="2.40.160.10:FF:000003">
    <property type="entry name" value="Outer mitochondrial membrane protein porin"/>
    <property type="match status" value="1"/>
</dbReference>
<dbReference type="Gene3D" id="2.40.160.10">
    <property type="entry name" value="Porin"/>
    <property type="match status" value="1"/>
</dbReference>
<dbReference type="InterPro" id="IPR023614">
    <property type="entry name" value="Porin_dom_sf"/>
</dbReference>
<dbReference type="InterPro" id="IPR001925">
    <property type="entry name" value="Porin_Euk"/>
</dbReference>
<dbReference type="InterPro" id="IPR027246">
    <property type="entry name" value="Porin_Euk/Tom40"/>
</dbReference>
<dbReference type="PANTHER" id="PTHR11743:SF60">
    <property type="entry name" value="MITOCHONDRIAL OUTER MEMBRANE PROTEIN PORIN 1"/>
    <property type="match status" value="1"/>
</dbReference>
<dbReference type="PANTHER" id="PTHR11743">
    <property type="entry name" value="VOLTAGE-DEPENDENT ANION-SELECTIVE CHANNEL"/>
    <property type="match status" value="1"/>
</dbReference>
<dbReference type="Pfam" id="PF01459">
    <property type="entry name" value="Porin_3"/>
    <property type="match status" value="1"/>
</dbReference>
<dbReference type="PROSITE" id="PS00558">
    <property type="entry name" value="EUKARYOTIC_PORIN"/>
    <property type="match status" value="1"/>
</dbReference>
<evidence type="ECO:0000250" key="1"/>
<evidence type="ECO:0000269" key="2">
    <source>
    </source>
</evidence>
<evidence type="ECO:0000269" key="3">
    <source>
    </source>
</evidence>
<evidence type="ECO:0000269" key="4">
    <source>
    </source>
</evidence>
<evidence type="ECO:0000269" key="5">
    <source>
    </source>
</evidence>
<evidence type="ECO:0000305" key="6"/>
<accession>Q9SRH5</accession>
<sequence length="276" mass="29425">MVKGPGLYTEIGKKARDLLYKDHNSDQKFSITTFSPAGVAITSTGTKKGDLLLGDVAFQSRRKNITTDLKVCTDSTFLITATVDEAAPGLRSIFSFKVPDQNSGKVELQYLHEYAGISTSMGLTQNPTVNFSGVIGSNVLAVGTDVSFDTKSGNFTKINAGLSFTKEDLIASLTVNDKGDLLNASYYHIVNPLFNTAVGAEVSHKLSSKDSTITVGTQHSLDPLTSVKARVNSAGIASALIQHEWKPKSFFTISGEVDTKSIDKSAKVGLALALKP</sequence>
<protein>
    <recommendedName>
        <fullName>Mitochondrial outer membrane protein porin 1</fullName>
    </recommendedName>
    <alternativeName>
        <fullName>Voltage-dependent anion-selective channel protein 1</fullName>
        <shortName>AtVDAC1</shortName>
        <shortName>VDAC-1</shortName>
    </alternativeName>
</protein>
<gene>
    <name type="primary">VDAC1</name>
    <name type="ordered locus">At3g01280</name>
    <name type="ORF">T22N4.9</name>
</gene>
<name>VDAC1_ARATH</name>